<evidence type="ECO:0000269" key="1">
    <source>
    </source>
</evidence>
<evidence type="ECO:0000305" key="2"/>
<reference key="1">
    <citation type="journal article" date="1992" name="J. Biol. Chem.">
        <title>Protein synthesis at the blood-brain barrier. The major protein secreted by amphibian choroid plexus is a lipocalin.</title>
        <authorList>
            <person name="Achen M.G."/>
            <person name="Harms P.J."/>
            <person name="Thomas T."/>
            <person name="Richardson S.J."/>
            <person name="Wettenhall R.E.H."/>
            <person name="Schreiber G."/>
        </authorList>
    </citation>
    <scope>NUCLEOTIDE SEQUENCE [MRNA]</scope>
    <scope>PROTEIN SEQUENCE OF 21-36; 38-40; 87-93; 106-113 AND 156-161</scope>
    <source>
        <tissue>Choroid plexus</tissue>
    </source>
</reference>
<dbReference type="EMBL" id="X67952">
    <property type="protein sequence ID" value="CAA48138.1"/>
    <property type="molecule type" value="mRNA"/>
</dbReference>
<dbReference type="EMBL" id="L06806">
    <property type="protein sequence ID" value="AAA48554.1"/>
    <property type="molecule type" value="mRNA"/>
</dbReference>
<dbReference type="PIR" id="A44456">
    <property type="entry name" value="S25465"/>
</dbReference>
<dbReference type="SMR" id="Q01584"/>
<dbReference type="GO" id="GO:0005576">
    <property type="term" value="C:extracellular region"/>
    <property type="evidence" value="ECO:0007669"/>
    <property type="project" value="UniProtKB-SubCell"/>
</dbReference>
<dbReference type="GO" id="GO:0036094">
    <property type="term" value="F:small molecule binding"/>
    <property type="evidence" value="ECO:0007669"/>
    <property type="project" value="InterPro"/>
</dbReference>
<dbReference type="CDD" id="cd19419">
    <property type="entry name" value="lipocalin_L-PGDS"/>
    <property type="match status" value="1"/>
</dbReference>
<dbReference type="Gene3D" id="2.40.128.20">
    <property type="match status" value="1"/>
</dbReference>
<dbReference type="InterPro" id="IPR012674">
    <property type="entry name" value="Calycin"/>
</dbReference>
<dbReference type="InterPro" id="IPR002345">
    <property type="entry name" value="Lipocalin"/>
</dbReference>
<dbReference type="InterPro" id="IPR022272">
    <property type="entry name" value="Lipocalin_CS"/>
</dbReference>
<dbReference type="InterPro" id="IPR000566">
    <property type="entry name" value="Lipocln_cytosolic_FA-bd_dom"/>
</dbReference>
<dbReference type="PANTHER" id="PTHR11430:SF32">
    <property type="entry name" value="CHLOROPLASTIC LIPOCALIN"/>
    <property type="match status" value="1"/>
</dbReference>
<dbReference type="PANTHER" id="PTHR11430">
    <property type="entry name" value="LIPOCALIN"/>
    <property type="match status" value="1"/>
</dbReference>
<dbReference type="Pfam" id="PF00061">
    <property type="entry name" value="Lipocalin"/>
    <property type="match status" value="1"/>
</dbReference>
<dbReference type="PRINTS" id="PR00179">
    <property type="entry name" value="LIPOCALIN"/>
</dbReference>
<dbReference type="PRINTS" id="PR01254">
    <property type="entry name" value="PGNDSYNTHASE"/>
</dbReference>
<dbReference type="SUPFAM" id="SSF50814">
    <property type="entry name" value="Lipocalins"/>
    <property type="match status" value="1"/>
</dbReference>
<dbReference type="PROSITE" id="PS00213">
    <property type="entry name" value="LIPOCALIN"/>
    <property type="match status" value="1"/>
</dbReference>
<name>LIPO_RHIMB</name>
<proteinExistence type="evidence at protein level"/>
<organism>
    <name type="scientific">Rhinella marina</name>
    <name type="common">Cane toad</name>
    <name type="synonym">Bufo marinus</name>
    <dbReference type="NCBI Taxonomy" id="8386"/>
    <lineage>
        <taxon>Eukaryota</taxon>
        <taxon>Metazoa</taxon>
        <taxon>Chordata</taxon>
        <taxon>Craniata</taxon>
        <taxon>Vertebrata</taxon>
        <taxon>Euteleostomi</taxon>
        <taxon>Amphibia</taxon>
        <taxon>Batrachia</taxon>
        <taxon>Anura</taxon>
        <taxon>Neobatrachia</taxon>
        <taxon>Hyloidea</taxon>
        <taxon>Bufonidae</taxon>
        <taxon>Rhinella</taxon>
    </lineage>
</organism>
<feature type="signal peptide" evidence="1">
    <location>
        <begin position="1"/>
        <end position="20"/>
    </location>
</feature>
<feature type="chain" id="PRO_0000017988" description="Lipocalin">
    <location>
        <begin position="21"/>
        <end position="183"/>
    </location>
</feature>
<feature type="disulfide bond">
    <location>
        <begin position="83"/>
        <end position="179"/>
    </location>
</feature>
<protein>
    <recommendedName>
        <fullName>Lipocalin</fullName>
    </recommendedName>
</protein>
<keyword id="KW-0903">Direct protein sequencing</keyword>
<keyword id="KW-1015">Disulfide bond</keyword>
<keyword id="KW-0964">Secreted</keyword>
<keyword id="KW-0732">Signal</keyword>
<sequence length="183" mass="20608">MKGLVLSFALVALSALCVYGDVPIQPDFQEDKILGKWYGIGLASNSNWFQSKKQQLKMCTTVITPTADGNLDVVATFPKLDRCEKKSMTYIKTEQPGRFLSKSPRYGSDHVIRVVESNYDEYTLMHTIKTKGNEVNTIVSLFGRRKTLSPELLDKFQQFAKEQGLTDDNILILPQTDSCMSEV</sequence>
<accession>Q01584</accession>
<comment type="function">
    <text>Might have a transport function across the blood brain barrier. Is supposed to have similar functions as a transthyretin which must have evolved after the stage of the amphibians in evolution.</text>
</comment>
<comment type="subunit">
    <text>Monomer.</text>
</comment>
<comment type="subcellular location">
    <subcellularLocation>
        <location>Secreted</location>
    </subcellularLocation>
    <text>Found in cerebrospinal fluid.</text>
</comment>
<comment type="tissue specificity">
    <text>Expressed mainly in choroid plexus. Much lower expression in other brain areas, and absent from liver.</text>
</comment>
<comment type="developmental stage">
    <text>Expressed throughout amphibian metamorphosis.</text>
</comment>
<comment type="similarity">
    <text evidence="2">Belongs to the calycin superfamily. Lipocalin family.</text>
</comment>